<keyword id="KW-0143">Chaperone</keyword>
<keyword id="KW-0963">Cytoplasm</keyword>
<keyword id="KW-1185">Reference proteome</keyword>
<keyword id="KW-0346">Stress response</keyword>
<accession>B7MGA8</accession>
<evidence type="ECO:0000255" key="1">
    <source>
        <dbReference type="HAMAP-Rule" id="MF_02000"/>
    </source>
</evidence>
<evidence type="ECO:0000255" key="2">
    <source>
        <dbReference type="PROSITE-ProRule" id="PRU00285"/>
    </source>
</evidence>
<comment type="function">
    <text evidence="1">Associates with aggregated proteins, together with IbpB, to stabilize and protect them from irreversible denaturation and extensive proteolysis during heat shock and oxidative stress. Aggregated proteins bound to the IbpAB complex are more efficiently refolded and reactivated by the ATP-dependent chaperone systems ClpB and DnaK/DnaJ/GrpE. Its activity is ATP-independent.</text>
</comment>
<comment type="subunit">
    <text evidence="1">Monomer. Forms homomultimers of about 100-150 subunits at optimal growth temperatures. Conformation changes to monomers at high temperatures or high ionic concentrations.</text>
</comment>
<comment type="subcellular location">
    <subcellularLocation>
        <location evidence="1">Cytoplasm</location>
    </subcellularLocation>
</comment>
<comment type="similarity">
    <text evidence="1 2">Belongs to the small heat shock protein (HSP20) family.</text>
</comment>
<name>IBPA_ECO45</name>
<organism>
    <name type="scientific">Escherichia coli O45:K1 (strain S88 / ExPEC)</name>
    <dbReference type="NCBI Taxonomy" id="585035"/>
    <lineage>
        <taxon>Bacteria</taxon>
        <taxon>Pseudomonadati</taxon>
        <taxon>Pseudomonadota</taxon>
        <taxon>Gammaproteobacteria</taxon>
        <taxon>Enterobacterales</taxon>
        <taxon>Enterobacteriaceae</taxon>
        <taxon>Escherichia</taxon>
    </lineage>
</organism>
<dbReference type="EMBL" id="CU928161">
    <property type="protein sequence ID" value="CAR05316.1"/>
    <property type="molecule type" value="Genomic_DNA"/>
</dbReference>
<dbReference type="RefSeq" id="WP_001243437.1">
    <property type="nucleotide sequence ID" value="NC_011742.1"/>
</dbReference>
<dbReference type="SMR" id="B7MGA8"/>
<dbReference type="GeneID" id="93778428"/>
<dbReference type="KEGG" id="ecz:ECS88_4110"/>
<dbReference type="HOGENOM" id="CLU_046737_4_2_6"/>
<dbReference type="Proteomes" id="UP000000747">
    <property type="component" value="Chromosome"/>
</dbReference>
<dbReference type="GO" id="GO:0005737">
    <property type="term" value="C:cytoplasm"/>
    <property type="evidence" value="ECO:0007669"/>
    <property type="project" value="UniProtKB-SubCell"/>
</dbReference>
<dbReference type="GO" id="GO:0050821">
    <property type="term" value="P:protein stabilization"/>
    <property type="evidence" value="ECO:0007669"/>
    <property type="project" value="UniProtKB-UniRule"/>
</dbReference>
<dbReference type="CDD" id="cd06470">
    <property type="entry name" value="ACD_IbpA-B_like"/>
    <property type="match status" value="1"/>
</dbReference>
<dbReference type="FunFam" id="2.60.40.790:FF:000002">
    <property type="entry name" value="Small heat shock protein IbpA"/>
    <property type="match status" value="1"/>
</dbReference>
<dbReference type="Gene3D" id="2.60.40.790">
    <property type="match status" value="1"/>
</dbReference>
<dbReference type="HAMAP" id="MF_02000">
    <property type="entry name" value="HSP20_IbpA"/>
    <property type="match status" value="1"/>
</dbReference>
<dbReference type="InterPro" id="IPR002068">
    <property type="entry name" value="A-crystallin/Hsp20_dom"/>
</dbReference>
<dbReference type="InterPro" id="IPR037913">
    <property type="entry name" value="ACD_IbpA/B"/>
</dbReference>
<dbReference type="InterPro" id="IPR008978">
    <property type="entry name" value="HSP20-like_chaperone"/>
</dbReference>
<dbReference type="InterPro" id="IPR023728">
    <property type="entry name" value="HSP20_IbpA"/>
</dbReference>
<dbReference type="NCBIfam" id="NF008013">
    <property type="entry name" value="PRK10743.1"/>
    <property type="match status" value="1"/>
</dbReference>
<dbReference type="PANTHER" id="PTHR47062">
    <property type="match status" value="1"/>
</dbReference>
<dbReference type="PANTHER" id="PTHR47062:SF1">
    <property type="entry name" value="SMALL HEAT SHOCK PROTEIN IBPA"/>
    <property type="match status" value="1"/>
</dbReference>
<dbReference type="Pfam" id="PF00011">
    <property type="entry name" value="HSP20"/>
    <property type="match status" value="1"/>
</dbReference>
<dbReference type="SUPFAM" id="SSF49764">
    <property type="entry name" value="HSP20-like chaperones"/>
    <property type="match status" value="1"/>
</dbReference>
<dbReference type="PROSITE" id="PS01031">
    <property type="entry name" value="SHSP"/>
    <property type="match status" value="1"/>
</dbReference>
<feature type="chain" id="PRO_1000189077" description="Small heat shock protein IbpA">
    <location>
        <begin position="1"/>
        <end position="137"/>
    </location>
</feature>
<feature type="domain" description="sHSP" evidence="2">
    <location>
        <begin position="28"/>
        <end position="137"/>
    </location>
</feature>
<protein>
    <recommendedName>
        <fullName evidence="1">Small heat shock protein IbpA</fullName>
    </recommendedName>
    <alternativeName>
        <fullName evidence="1">16 kDa heat shock protein A</fullName>
    </alternativeName>
</protein>
<sequence length="137" mass="15774">MRNFDLSPLYRSAIGFDRLFNHLENNQSQSNGGYPPYNVELVDENHYRIAIAVAGFAESELEITAQDNLLVVKGAHADEQKERTYLYQGIAERNFERKFQLAENIHVRGANLVNGLLYIDLERVIPEAKKPRRIEIN</sequence>
<reference key="1">
    <citation type="journal article" date="2009" name="PLoS Genet.">
        <title>Organised genome dynamics in the Escherichia coli species results in highly diverse adaptive paths.</title>
        <authorList>
            <person name="Touchon M."/>
            <person name="Hoede C."/>
            <person name="Tenaillon O."/>
            <person name="Barbe V."/>
            <person name="Baeriswyl S."/>
            <person name="Bidet P."/>
            <person name="Bingen E."/>
            <person name="Bonacorsi S."/>
            <person name="Bouchier C."/>
            <person name="Bouvet O."/>
            <person name="Calteau A."/>
            <person name="Chiapello H."/>
            <person name="Clermont O."/>
            <person name="Cruveiller S."/>
            <person name="Danchin A."/>
            <person name="Diard M."/>
            <person name="Dossat C."/>
            <person name="Karoui M.E."/>
            <person name="Frapy E."/>
            <person name="Garry L."/>
            <person name="Ghigo J.M."/>
            <person name="Gilles A.M."/>
            <person name="Johnson J."/>
            <person name="Le Bouguenec C."/>
            <person name="Lescat M."/>
            <person name="Mangenot S."/>
            <person name="Martinez-Jehanne V."/>
            <person name="Matic I."/>
            <person name="Nassif X."/>
            <person name="Oztas S."/>
            <person name="Petit M.A."/>
            <person name="Pichon C."/>
            <person name="Rouy Z."/>
            <person name="Ruf C.S."/>
            <person name="Schneider D."/>
            <person name="Tourret J."/>
            <person name="Vacherie B."/>
            <person name="Vallenet D."/>
            <person name="Medigue C."/>
            <person name="Rocha E.P.C."/>
            <person name="Denamur E."/>
        </authorList>
    </citation>
    <scope>NUCLEOTIDE SEQUENCE [LARGE SCALE GENOMIC DNA]</scope>
    <source>
        <strain>S88 / ExPEC</strain>
    </source>
</reference>
<gene>
    <name evidence="1" type="primary">ibpA</name>
    <name type="ordered locus">ECS88_4110</name>
</gene>
<proteinExistence type="inferred from homology"/>